<reference key="1">
    <citation type="journal article" date="2009" name="Genome Res.">
        <title>Newly introduced genomic prophage islands are critical determinants of in vivo competitiveness in the Liverpool epidemic strain of Pseudomonas aeruginosa.</title>
        <authorList>
            <person name="Winstanley C."/>
            <person name="Langille M.G.I."/>
            <person name="Fothergill J.L."/>
            <person name="Kukavica-Ibrulj I."/>
            <person name="Paradis-Bleau C."/>
            <person name="Sanschagrin F."/>
            <person name="Thomson N.R."/>
            <person name="Winsor G.L."/>
            <person name="Quail M.A."/>
            <person name="Lennard N."/>
            <person name="Bignell A."/>
            <person name="Clarke L."/>
            <person name="Seeger K."/>
            <person name="Saunders D."/>
            <person name="Harris D."/>
            <person name="Parkhill J."/>
            <person name="Hancock R.E.W."/>
            <person name="Brinkman F.S.L."/>
            <person name="Levesque R.C."/>
        </authorList>
    </citation>
    <scope>NUCLEOTIDE SEQUENCE [LARGE SCALE GENOMIC DNA]</scope>
    <source>
        <strain>LESB58</strain>
    </source>
</reference>
<comment type="function">
    <text evidence="1">Protease subunit of a proteasome-like degradation complex believed to be a general protein degrading machinery.</text>
</comment>
<comment type="catalytic activity">
    <reaction evidence="1">
        <text>ATP-dependent cleavage of peptide bonds with broad specificity.</text>
        <dbReference type="EC" id="3.4.25.2"/>
    </reaction>
</comment>
<comment type="activity regulation">
    <text evidence="1">Allosterically activated by HslU binding.</text>
</comment>
<comment type="subunit">
    <text evidence="1">A double ring-shaped homohexamer of HslV is capped on each side by a ring-shaped HslU homohexamer. The assembly of the HslU/HslV complex is dependent on binding of ATP.</text>
</comment>
<comment type="subcellular location">
    <subcellularLocation>
        <location evidence="1">Cytoplasm</location>
    </subcellularLocation>
</comment>
<comment type="similarity">
    <text evidence="1">Belongs to the peptidase T1B family. HslV subfamily.</text>
</comment>
<gene>
    <name evidence="1" type="primary">hslV</name>
    <name type="ordered locus">PLES_54431</name>
</gene>
<dbReference type="EC" id="3.4.25.2" evidence="1"/>
<dbReference type="EMBL" id="FM209186">
    <property type="protein sequence ID" value="CAW30197.1"/>
    <property type="molecule type" value="Genomic_DNA"/>
</dbReference>
<dbReference type="RefSeq" id="WP_003095852.1">
    <property type="nucleotide sequence ID" value="NC_011770.1"/>
</dbReference>
<dbReference type="SMR" id="B7V3E6"/>
<dbReference type="MEROPS" id="T01.006"/>
<dbReference type="GeneID" id="77223590"/>
<dbReference type="KEGG" id="pag:PLES_54431"/>
<dbReference type="HOGENOM" id="CLU_093872_1_0_6"/>
<dbReference type="GO" id="GO:0009376">
    <property type="term" value="C:HslUV protease complex"/>
    <property type="evidence" value="ECO:0007669"/>
    <property type="project" value="UniProtKB-UniRule"/>
</dbReference>
<dbReference type="GO" id="GO:0005839">
    <property type="term" value="C:proteasome core complex"/>
    <property type="evidence" value="ECO:0007669"/>
    <property type="project" value="InterPro"/>
</dbReference>
<dbReference type="GO" id="GO:0046872">
    <property type="term" value="F:metal ion binding"/>
    <property type="evidence" value="ECO:0007669"/>
    <property type="project" value="UniProtKB-KW"/>
</dbReference>
<dbReference type="GO" id="GO:0004298">
    <property type="term" value="F:threonine-type endopeptidase activity"/>
    <property type="evidence" value="ECO:0007669"/>
    <property type="project" value="UniProtKB-KW"/>
</dbReference>
<dbReference type="GO" id="GO:0051603">
    <property type="term" value="P:proteolysis involved in protein catabolic process"/>
    <property type="evidence" value="ECO:0007669"/>
    <property type="project" value="InterPro"/>
</dbReference>
<dbReference type="CDD" id="cd01913">
    <property type="entry name" value="protease_HslV"/>
    <property type="match status" value="1"/>
</dbReference>
<dbReference type="FunFam" id="3.60.20.10:FF:000002">
    <property type="entry name" value="ATP-dependent protease subunit HslV"/>
    <property type="match status" value="1"/>
</dbReference>
<dbReference type="Gene3D" id="3.60.20.10">
    <property type="entry name" value="Glutamine Phosphoribosylpyrophosphate, subunit 1, domain 1"/>
    <property type="match status" value="1"/>
</dbReference>
<dbReference type="HAMAP" id="MF_00248">
    <property type="entry name" value="HslV"/>
    <property type="match status" value="1"/>
</dbReference>
<dbReference type="InterPro" id="IPR022281">
    <property type="entry name" value="ATP-dep_Prtase_HsIV_su"/>
</dbReference>
<dbReference type="InterPro" id="IPR029055">
    <property type="entry name" value="Ntn_hydrolases_N"/>
</dbReference>
<dbReference type="InterPro" id="IPR001353">
    <property type="entry name" value="Proteasome_sua/b"/>
</dbReference>
<dbReference type="InterPro" id="IPR023333">
    <property type="entry name" value="Proteasome_suB-type"/>
</dbReference>
<dbReference type="NCBIfam" id="TIGR03692">
    <property type="entry name" value="ATP_dep_HslV"/>
    <property type="match status" value="1"/>
</dbReference>
<dbReference type="NCBIfam" id="NF003964">
    <property type="entry name" value="PRK05456.1"/>
    <property type="match status" value="1"/>
</dbReference>
<dbReference type="PANTHER" id="PTHR32194:SF0">
    <property type="entry name" value="ATP-DEPENDENT PROTEASE SUBUNIT HSLV"/>
    <property type="match status" value="1"/>
</dbReference>
<dbReference type="PANTHER" id="PTHR32194">
    <property type="entry name" value="METALLOPROTEASE TLDD"/>
    <property type="match status" value="1"/>
</dbReference>
<dbReference type="Pfam" id="PF00227">
    <property type="entry name" value="Proteasome"/>
    <property type="match status" value="1"/>
</dbReference>
<dbReference type="PIRSF" id="PIRSF039093">
    <property type="entry name" value="HslV"/>
    <property type="match status" value="1"/>
</dbReference>
<dbReference type="SUPFAM" id="SSF56235">
    <property type="entry name" value="N-terminal nucleophile aminohydrolases (Ntn hydrolases)"/>
    <property type="match status" value="1"/>
</dbReference>
<dbReference type="PROSITE" id="PS51476">
    <property type="entry name" value="PROTEASOME_BETA_2"/>
    <property type="match status" value="1"/>
</dbReference>
<evidence type="ECO:0000255" key="1">
    <source>
        <dbReference type="HAMAP-Rule" id="MF_00248"/>
    </source>
</evidence>
<feature type="chain" id="PRO_1000192685" description="ATP-dependent protease subunit HslV">
    <location>
        <begin position="1"/>
        <end position="177"/>
    </location>
</feature>
<feature type="active site" evidence="1">
    <location>
        <position position="2"/>
    </location>
</feature>
<feature type="binding site" evidence="1">
    <location>
        <position position="158"/>
    </location>
    <ligand>
        <name>Na(+)</name>
        <dbReference type="ChEBI" id="CHEBI:29101"/>
    </ligand>
</feature>
<feature type="binding site" evidence="1">
    <location>
        <position position="161"/>
    </location>
    <ligand>
        <name>Na(+)</name>
        <dbReference type="ChEBI" id="CHEBI:29101"/>
    </ligand>
</feature>
<feature type="binding site" evidence="1">
    <location>
        <position position="164"/>
    </location>
    <ligand>
        <name>Na(+)</name>
        <dbReference type="ChEBI" id="CHEBI:29101"/>
    </ligand>
</feature>
<name>HSLV_PSEA8</name>
<protein>
    <recommendedName>
        <fullName evidence="1">ATP-dependent protease subunit HslV</fullName>
        <ecNumber evidence="1">3.4.25.2</ecNumber>
    </recommendedName>
</protein>
<organism>
    <name type="scientific">Pseudomonas aeruginosa (strain LESB58)</name>
    <dbReference type="NCBI Taxonomy" id="557722"/>
    <lineage>
        <taxon>Bacteria</taxon>
        <taxon>Pseudomonadati</taxon>
        <taxon>Pseudomonadota</taxon>
        <taxon>Gammaproteobacteria</taxon>
        <taxon>Pseudomonadales</taxon>
        <taxon>Pseudomonadaceae</taxon>
        <taxon>Pseudomonas</taxon>
    </lineage>
</organism>
<accession>B7V3E6</accession>
<keyword id="KW-0021">Allosteric enzyme</keyword>
<keyword id="KW-0963">Cytoplasm</keyword>
<keyword id="KW-0378">Hydrolase</keyword>
<keyword id="KW-0479">Metal-binding</keyword>
<keyword id="KW-0645">Protease</keyword>
<keyword id="KW-0915">Sodium</keyword>
<keyword id="KW-0346">Stress response</keyword>
<keyword id="KW-0888">Threonine protease</keyword>
<proteinExistence type="inferred from homology"/>
<sequence>MTTIVSVRRNGKVVMGGDGQVSLGNTVMKGNAKKVRRLYHGQVLAGFAGATADAFTLFERFEQQLEKHQGHLVRAAVELAKDWRTDRSLSRLEAMLAVANKDASLIITGNGDVVEPEHGLIAMGSGGGFAQAAALALLQHNAELSAREVAETALNIAGSICVFTNQNLTIEELDSAV</sequence>